<protein>
    <recommendedName>
        <fullName>GDP-fucose protein O-fucosyltransferase 2</fullName>
        <ecNumber evidence="4 7">2.4.1.221</ecNumber>
    </recommendedName>
    <alternativeName>
        <fullName>Peptide-O-fucosyltransferase 2</fullName>
        <shortName>O-FucT-2</shortName>
    </alternativeName>
</protein>
<name>OFUT2_HUMAN</name>
<keyword id="KW-0002">3D-structure</keyword>
<keyword id="KW-0025">Alternative splicing</keyword>
<keyword id="KW-0119">Carbohydrate metabolism</keyword>
<keyword id="KW-1015">Disulfide bond</keyword>
<keyword id="KW-0256">Endoplasmic reticulum</keyword>
<keyword id="KW-0294">Fucose metabolism</keyword>
<keyword id="KW-0325">Glycoprotein</keyword>
<keyword id="KW-0328">Glycosyltransferase</keyword>
<keyword id="KW-0333">Golgi apparatus</keyword>
<keyword id="KW-1267">Proteomics identification</keyword>
<keyword id="KW-1185">Reference proteome</keyword>
<keyword id="KW-0732">Signal</keyword>
<keyword id="KW-0808">Transferase</keyword>
<dbReference type="EC" id="2.4.1.221" evidence="4 7"/>
<dbReference type="EMBL" id="AJ302080">
    <property type="protein sequence ID" value="CAC24557.1"/>
    <property type="molecule type" value="mRNA"/>
</dbReference>
<dbReference type="EMBL" id="AJ302079">
    <property type="protein sequence ID" value="CAC24556.1"/>
    <property type="molecule type" value="mRNA"/>
</dbReference>
<dbReference type="EMBL" id="AY066015">
    <property type="protein sequence ID" value="AAL47681.2"/>
    <property type="molecule type" value="mRNA"/>
</dbReference>
<dbReference type="EMBL" id="AJ575591">
    <property type="protein sequence ID" value="CAE01472.1"/>
    <property type="molecule type" value="mRNA"/>
</dbReference>
<dbReference type="EMBL" id="AB023175">
    <property type="protein sequence ID" value="BAA76802.1"/>
    <property type="status" value="ALT_INIT"/>
    <property type="molecule type" value="mRNA"/>
</dbReference>
<dbReference type="EMBL" id="AL110285">
    <property type="protein sequence ID" value="CAB53715.2"/>
    <property type="molecule type" value="mRNA"/>
</dbReference>
<dbReference type="EMBL" id="AL163301">
    <property type="protein sequence ID" value="CAB90496.1"/>
    <property type="status" value="ALT_INIT"/>
    <property type="molecule type" value="Genomic_DNA"/>
</dbReference>
<dbReference type="EMBL" id="BC011044">
    <property type="protein sequence ID" value="AAH11044.1"/>
    <property type="molecule type" value="mRNA"/>
</dbReference>
<dbReference type="EMBL" id="BC064623">
    <property type="protein sequence ID" value="AAH64623.1"/>
    <property type="molecule type" value="mRNA"/>
</dbReference>
<dbReference type="CCDS" id="CCDS13719.1">
    <molecule id="Q9Y2G5-3"/>
</dbReference>
<dbReference type="CCDS" id="CCDS13721.1">
    <molecule id="Q9Y2G5-1"/>
</dbReference>
<dbReference type="RefSeq" id="NP_056042.1">
    <molecule id="Q9Y2G5-1"/>
    <property type="nucleotide sequence ID" value="NM_015227.6"/>
</dbReference>
<dbReference type="RefSeq" id="NP_598368.2">
    <molecule id="Q9Y2G5-3"/>
    <property type="nucleotide sequence ID" value="NM_133635.4"/>
</dbReference>
<dbReference type="PDB" id="4AP5">
    <property type="method" value="X-ray"/>
    <property type="resolution" value="3.00 A"/>
    <property type="chains" value="A/B=22-429"/>
</dbReference>
<dbReference type="PDB" id="4AP6">
    <property type="method" value="X-ray"/>
    <property type="resolution" value="3.40 A"/>
    <property type="chains" value="A/B/C/D=37-429"/>
</dbReference>
<dbReference type="PDBsum" id="4AP5"/>
<dbReference type="PDBsum" id="4AP6"/>
<dbReference type="SMR" id="Q9Y2G5"/>
<dbReference type="BioGRID" id="116876">
    <property type="interactions" value="17"/>
</dbReference>
<dbReference type="FunCoup" id="Q9Y2G5">
    <property type="interactions" value="1206"/>
</dbReference>
<dbReference type="IntAct" id="Q9Y2G5">
    <property type="interactions" value="4"/>
</dbReference>
<dbReference type="STRING" id="9606.ENSP00000339613"/>
<dbReference type="CAZy" id="GT68">
    <property type="family name" value="Glycosyltransferase Family 68"/>
</dbReference>
<dbReference type="GlyCosmos" id="Q9Y2G5">
    <property type="glycosylation" value="3 sites, No reported glycans"/>
</dbReference>
<dbReference type="GlyGen" id="Q9Y2G5">
    <property type="glycosylation" value="4 sites, 10 N-linked glycans (2 sites), 1 O-linked glycan (1 site)"/>
</dbReference>
<dbReference type="iPTMnet" id="Q9Y2G5"/>
<dbReference type="PhosphoSitePlus" id="Q9Y2G5"/>
<dbReference type="BioMuta" id="POFUT2"/>
<dbReference type="DMDM" id="59803123"/>
<dbReference type="jPOST" id="Q9Y2G5"/>
<dbReference type="MassIVE" id="Q9Y2G5"/>
<dbReference type="PaxDb" id="9606-ENSP00000339613"/>
<dbReference type="PeptideAtlas" id="Q9Y2G5"/>
<dbReference type="ProteomicsDB" id="85769">
    <molecule id="Q9Y2G5-3"/>
</dbReference>
<dbReference type="ProteomicsDB" id="85770">
    <molecule id="Q9Y2G5-1"/>
</dbReference>
<dbReference type="ProteomicsDB" id="85771">
    <molecule id="Q9Y2G5-2"/>
</dbReference>
<dbReference type="Pumba" id="Q9Y2G5"/>
<dbReference type="Antibodypedia" id="10462">
    <property type="antibodies" value="294 antibodies from 29 providers"/>
</dbReference>
<dbReference type="DNASU" id="23275"/>
<dbReference type="Ensembl" id="ENST00000331343.11">
    <molecule id="Q9Y2G5-1"/>
    <property type="protein sequence ID" value="ENSP00000329682.7"/>
    <property type="gene ID" value="ENSG00000186866.17"/>
</dbReference>
<dbReference type="Ensembl" id="ENST00000334538.13">
    <molecule id="Q9Y2G5-2"/>
    <property type="protein sequence ID" value="ENSP00000335427.9"/>
    <property type="gene ID" value="ENSG00000186866.17"/>
</dbReference>
<dbReference type="Ensembl" id="ENST00000349485.10">
    <molecule id="Q9Y2G5-3"/>
    <property type="protein sequence ID" value="ENSP00000339613.5"/>
    <property type="gene ID" value="ENSG00000186866.17"/>
</dbReference>
<dbReference type="GeneID" id="23275"/>
<dbReference type="KEGG" id="hsa:23275"/>
<dbReference type="MANE-Select" id="ENST00000349485.10">
    <property type="protein sequence ID" value="ENSP00000339613.5"/>
    <property type="RefSeq nucleotide sequence ID" value="NM_133635.6"/>
    <property type="RefSeq protein sequence ID" value="NP_598368.2"/>
</dbReference>
<dbReference type="UCSC" id="uc002zhb.4">
    <molecule id="Q9Y2G5-3"/>
    <property type="organism name" value="human"/>
</dbReference>
<dbReference type="AGR" id="HGNC:14683"/>
<dbReference type="CTD" id="23275"/>
<dbReference type="DisGeNET" id="23275"/>
<dbReference type="GeneCards" id="POFUT2"/>
<dbReference type="HGNC" id="HGNC:14683">
    <property type="gene designation" value="POFUT2"/>
</dbReference>
<dbReference type="HPA" id="ENSG00000186866">
    <property type="expression patterns" value="Low tissue specificity"/>
</dbReference>
<dbReference type="MIM" id="610249">
    <property type="type" value="gene"/>
</dbReference>
<dbReference type="neXtProt" id="NX_Q9Y2G5"/>
<dbReference type="OpenTargets" id="ENSG00000186866"/>
<dbReference type="PharmGKB" id="PA25867"/>
<dbReference type="VEuPathDB" id="HostDB:ENSG00000186866"/>
<dbReference type="eggNOG" id="ENOG502QPS6">
    <property type="taxonomic scope" value="Eukaryota"/>
</dbReference>
<dbReference type="GeneTree" id="ENSGT00390000007989"/>
<dbReference type="HOGENOM" id="CLU_033856_0_0_1"/>
<dbReference type="InParanoid" id="Q9Y2G5"/>
<dbReference type="OMA" id="RNAVWPI"/>
<dbReference type="OrthoDB" id="422368at2759"/>
<dbReference type="PAN-GO" id="Q9Y2G5">
    <property type="GO annotations" value="1 GO annotation based on evolutionary models"/>
</dbReference>
<dbReference type="PhylomeDB" id="Q9Y2G5"/>
<dbReference type="TreeFam" id="TF314337"/>
<dbReference type="BRENDA" id="2.4.1.221">
    <property type="organism ID" value="2681"/>
</dbReference>
<dbReference type="PathwayCommons" id="Q9Y2G5"/>
<dbReference type="Reactome" id="R-HSA-5173214">
    <property type="pathway name" value="O-glycosylation of TSR domain-containing proteins"/>
</dbReference>
<dbReference type="SignaLink" id="Q9Y2G5"/>
<dbReference type="UniPathway" id="UPA00378"/>
<dbReference type="BioGRID-ORCS" id="23275">
    <property type="hits" value="15 hits in 1155 CRISPR screens"/>
</dbReference>
<dbReference type="EvolutionaryTrace" id="Q9Y2G5"/>
<dbReference type="GenomeRNAi" id="23275"/>
<dbReference type="Pharos" id="Q9Y2G5">
    <property type="development level" value="Tbio"/>
</dbReference>
<dbReference type="PRO" id="PR:Q9Y2G5"/>
<dbReference type="Proteomes" id="UP000005640">
    <property type="component" value="Chromosome 21"/>
</dbReference>
<dbReference type="RNAct" id="Q9Y2G5">
    <property type="molecule type" value="protein"/>
</dbReference>
<dbReference type="Bgee" id="ENSG00000186866">
    <property type="expression patterns" value="Expressed in right uterine tube and 185 other cell types or tissues"/>
</dbReference>
<dbReference type="ExpressionAtlas" id="Q9Y2G5">
    <property type="expression patterns" value="baseline and differential"/>
</dbReference>
<dbReference type="GO" id="GO:0005789">
    <property type="term" value="C:endoplasmic reticulum membrane"/>
    <property type="evidence" value="ECO:0000304"/>
    <property type="project" value="Reactome"/>
</dbReference>
<dbReference type="GO" id="GO:0005794">
    <property type="term" value="C:Golgi apparatus"/>
    <property type="evidence" value="ECO:0000314"/>
    <property type="project" value="UniProtKB"/>
</dbReference>
<dbReference type="GO" id="GO:0046922">
    <property type="term" value="F:peptide-O-fucosyltransferase activity"/>
    <property type="evidence" value="ECO:0000314"/>
    <property type="project" value="UniProtKB"/>
</dbReference>
<dbReference type="GO" id="GO:0006004">
    <property type="term" value="P:fucose metabolic process"/>
    <property type="evidence" value="ECO:0007669"/>
    <property type="project" value="UniProtKB-KW"/>
</dbReference>
<dbReference type="GO" id="GO:0001707">
    <property type="term" value="P:mesoderm formation"/>
    <property type="evidence" value="ECO:0007669"/>
    <property type="project" value="Ensembl"/>
</dbReference>
<dbReference type="GO" id="GO:1903334">
    <property type="term" value="P:positive regulation of protein folding"/>
    <property type="evidence" value="ECO:0000315"/>
    <property type="project" value="CACAO"/>
</dbReference>
<dbReference type="GO" id="GO:0036066">
    <property type="term" value="P:protein O-linked fucosylation"/>
    <property type="evidence" value="ECO:0000314"/>
    <property type="project" value="UniProtKB"/>
</dbReference>
<dbReference type="GO" id="GO:0010717">
    <property type="term" value="P:regulation of epithelial to mesenchymal transition"/>
    <property type="evidence" value="ECO:0007669"/>
    <property type="project" value="Ensembl"/>
</dbReference>
<dbReference type="GO" id="GO:0010468">
    <property type="term" value="P:regulation of gene expression"/>
    <property type="evidence" value="ECO:0007669"/>
    <property type="project" value="Ensembl"/>
</dbReference>
<dbReference type="GO" id="GO:0051046">
    <property type="term" value="P:regulation of secretion"/>
    <property type="evidence" value="ECO:0000314"/>
    <property type="project" value="UniProtKB"/>
</dbReference>
<dbReference type="CDD" id="cd11298">
    <property type="entry name" value="O-FucT-2"/>
    <property type="match status" value="1"/>
</dbReference>
<dbReference type="FunFam" id="3.40.50.11340:FF:000002">
    <property type="entry name" value="GDP-fucose protein O-fucosyltransferase 2"/>
    <property type="match status" value="1"/>
</dbReference>
<dbReference type="FunFam" id="3.40.50.11350:FF:000002">
    <property type="entry name" value="GDP-fucose protein O-fucosyltransferase 2"/>
    <property type="match status" value="1"/>
</dbReference>
<dbReference type="Gene3D" id="3.40.50.11340">
    <property type="match status" value="1"/>
</dbReference>
<dbReference type="Gene3D" id="3.40.50.11350">
    <property type="match status" value="1"/>
</dbReference>
<dbReference type="InterPro" id="IPR019378">
    <property type="entry name" value="GDP-Fuc_O-FucTrfase"/>
</dbReference>
<dbReference type="InterPro" id="IPR045130">
    <property type="entry name" value="OFUT2-like"/>
</dbReference>
<dbReference type="PANTHER" id="PTHR13398">
    <property type="entry name" value="GDP-FUCOSE PROTEIN O-FUCOSYLTRANSFERASE 2"/>
    <property type="match status" value="1"/>
</dbReference>
<dbReference type="PANTHER" id="PTHR13398:SF0">
    <property type="entry name" value="GDP-FUCOSE PROTEIN O-FUCOSYLTRANSFERASE 2"/>
    <property type="match status" value="1"/>
</dbReference>
<dbReference type="Pfam" id="PF10250">
    <property type="entry name" value="O-FucT"/>
    <property type="match status" value="1"/>
</dbReference>
<sequence length="429" mass="49976">MATLSFVFLLLGAVSWPPASASGQEFWPGQSAADILSGAASRRRYLLYDVNPPEGFNLRRDVYIRIASLLKTLLKTEEWVLVLPPWGRLYHWQSPDIHQVRIPWSEFFDLPSLNKNIPVIEYEQFIAESGGPFIDQVYVLQSYAEGWKEGTWEEKVDERPCIDQLLYSQDKHEYYRGWFWGYEETRGLNVSCLSVQGSASIVAPLLLRNTSARSVMLDRAENLLHDHYGGKEYWDTRRSMVFARHLREVGDEFRSRHLNSTDDADRIPFQEDWMKMKVKLGSALGGPYLGVHLRRKDFIWGHRQDVPSLEGAVRKIRSLMKTHRLDKVFVATDAVRKEYEELKKLLPEMVRFEPTWEELELYKDGGVAIIDQWICAHARFFIGTSVSTFSFRIHEEREILGLDPKTTYNRFCGDQEKACEQPTHWKITY</sequence>
<feature type="signal peptide" evidence="2 18">
    <location>
        <begin position="1"/>
        <end position="21"/>
    </location>
</feature>
<feature type="chain" id="PRO_0000012154" description="GDP-fucose protein O-fucosyltransferase 2">
    <location>
        <begin position="22"/>
        <end position="429"/>
    </location>
</feature>
<feature type="active site" description="Proton acceptor" evidence="15">
    <location>
        <position position="54"/>
    </location>
</feature>
<feature type="binding site" evidence="7 17">
    <location>
        <begin position="53"/>
        <end position="57"/>
    </location>
    <ligand>
        <name>GDP-beta-L-fucose</name>
        <dbReference type="ChEBI" id="CHEBI:57273"/>
    </ligand>
</feature>
<feature type="binding site" evidence="7 17">
    <location>
        <begin position="292"/>
        <end position="294"/>
    </location>
    <ligand>
        <name>GDP-beta-L-fucose</name>
        <dbReference type="ChEBI" id="CHEBI:57273"/>
    </ligand>
</feature>
<feature type="binding site" evidence="7 17">
    <location>
        <position position="371"/>
    </location>
    <ligand>
        <name>GDP-beta-L-fucose</name>
        <dbReference type="ChEBI" id="CHEBI:57273"/>
    </ligand>
</feature>
<feature type="binding site" evidence="7 17">
    <location>
        <begin position="388"/>
        <end position="389"/>
    </location>
    <ligand>
        <name>GDP-beta-L-fucose</name>
        <dbReference type="ChEBI" id="CHEBI:57273"/>
    </ligand>
</feature>
<feature type="site" description="Essential for catalytic activity" evidence="6 7">
    <location>
        <position position="396"/>
    </location>
</feature>
<feature type="glycosylation site" description="N-linked (GlcNAc...) asparagine" evidence="7">
    <location>
        <position position="189"/>
    </location>
</feature>
<feature type="glycosylation site" description="N-linked (GlcNAc...) asparagine" evidence="2">
    <location>
        <position position="209"/>
    </location>
</feature>
<feature type="glycosylation site" description="N-linked (GlcNAc...) asparagine" evidence="7">
    <location>
        <position position="259"/>
    </location>
</feature>
<feature type="disulfide bond" evidence="7 16 17">
    <location>
        <begin position="161"/>
        <end position="192"/>
    </location>
</feature>
<feature type="disulfide bond" evidence="7 16 17">
    <location>
        <begin position="412"/>
        <end position="419"/>
    </location>
</feature>
<feature type="splice variant" id="VSP_003833" description="In isoform B." evidence="9 10 11">
    <original>RF</original>
    <variation>SS</variation>
    <location>
        <begin position="379"/>
        <end position="380"/>
    </location>
</feature>
<feature type="splice variant" id="VSP_003832" description="In isoform A." evidence="8 9">
    <original>FFIGTSVSTFSFRIHEEREILGLDPKTTYNRFCGDQEKACEQPTHWKITY</original>
    <variation>CLPTSLSAESGSGGFQRFFCPKYSVSEQMVACVHSGHFHTVCLLV</variation>
    <location>
        <begin position="380"/>
        <end position="429"/>
    </location>
</feature>
<feature type="splice variant" id="VSP_003834" description="In isoform B." evidence="9 10 11">
    <location>
        <begin position="381"/>
        <end position="429"/>
    </location>
</feature>
<feature type="mutagenesis site" description="Abolishes enzyme activity." evidence="7">
    <original>E</original>
    <variation>A</variation>
    <location>
        <position position="54"/>
    </location>
</feature>
<feature type="mutagenesis site" description="Abolishes enzyme activity." evidence="7">
    <original>W</original>
    <variation>A</variation>
    <location>
        <position position="92"/>
    </location>
</feature>
<feature type="mutagenesis site" description="Reduces enzyme activity." evidence="7">
    <original>W</original>
    <variation>A</variation>
    <location>
        <position position="152"/>
    </location>
</feature>
<feature type="mutagenesis site" description="Reduces enzyme activity." evidence="7">
    <original>W</original>
    <variation>A</variation>
    <location>
        <position position="273"/>
    </location>
</feature>
<feature type="mutagenesis site" description="Abolishes enzyme activity." evidence="7">
    <original>R</original>
    <variation>A</variation>
    <location>
        <position position="294"/>
    </location>
</feature>
<feature type="mutagenesis site" description="Reduces enzyme activity." evidence="7">
    <original>D</original>
    <variation>A</variation>
    <location>
        <position position="297"/>
    </location>
</feature>
<feature type="mutagenesis site" description="No enhanced secretion of ADASMTS13; when associated with A-396." evidence="6">
    <original>E</original>
    <variation>A</variation>
    <location>
        <position position="395"/>
    </location>
</feature>
<feature type="mutagenesis site" description="Reduces enzyme activity. No enhanced secretion of ADASMTS13; when associated with A-396." evidence="6 7">
    <original>E</original>
    <variation>A</variation>
    <location>
        <position position="396"/>
    </location>
</feature>
<feature type="strand" evidence="19">
    <location>
        <begin position="44"/>
        <end position="48"/>
    </location>
</feature>
<feature type="helix" evidence="19">
    <location>
        <begin position="56"/>
        <end position="74"/>
    </location>
</feature>
<feature type="strand" evidence="19">
    <location>
        <begin position="79"/>
        <end position="83"/>
    </location>
</feature>
<feature type="helix" evidence="19">
    <location>
        <begin position="91"/>
        <end position="93"/>
    </location>
</feature>
<feature type="helix" evidence="19">
    <location>
        <begin position="104"/>
        <end position="106"/>
    </location>
</feature>
<feature type="helix" evidence="19">
    <location>
        <begin position="110"/>
        <end position="114"/>
    </location>
</feature>
<feature type="strand" evidence="19">
    <location>
        <begin position="119"/>
        <end position="121"/>
    </location>
</feature>
<feature type="helix" evidence="19">
    <location>
        <begin position="122"/>
        <end position="128"/>
    </location>
</feature>
<feature type="strand" evidence="19">
    <location>
        <begin position="129"/>
        <end position="141"/>
    </location>
</feature>
<feature type="strand" evidence="19">
    <location>
        <begin position="156"/>
        <end position="159"/>
    </location>
</feature>
<feature type="helix" evidence="19">
    <location>
        <begin position="179"/>
        <end position="181"/>
    </location>
</feature>
<feature type="strand" evidence="19">
    <location>
        <begin position="186"/>
        <end position="195"/>
    </location>
</feature>
<feature type="helix" evidence="19">
    <location>
        <begin position="199"/>
        <end position="202"/>
    </location>
</feature>
<feature type="helix" evidence="19">
    <location>
        <begin position="203"/>
        <end position="208"/>
    </location>
</feature>
<feature type="strand" evidence="19">
    <location>
        <begin position="213"/>
        <end position="219"/>
    </location>
</feature>
<feature type="helix" evidence="19">
    <location>
        <begin position="220"/>
        <end position="222"/>
    </location>
</feature>
<feature type="helix" evidence="19">
    <location>
        <begin position="231"/>
        <end position="238"/>
    </location>
</feature>
<feature type="helix" evidence="19">
    <location>
        <begin position="244"/>
        <end position="258"/>
    </location>
</feature>
<feature type="turn" evidence="19">
    <location>
        <begin position="262"/>
        <end position="266"/>
    </location>
</feature>
<feature type="helix" evidence="19">
    <location>
        <begin position="273"/>
        <end position="275"/>
    </location>
</feature>
<feature type="strand" evidence="19">
    <location>
        <begin position="286"/>
        <end position="293"/>
    </location>
</feature>
<feature type="turn" evidence="19">
    <location>
        <begin position="296"/>
        <end position="302"/>
    </location>
</feature>
<feature type="strand" evidence="19">
    <location>
        <begin position="304"/>
        <end position="306"/>
    </location>
</feature>
<feature type="helix" evidence="19">
    <location>
        <begin position="309"/>
        <end position="323"/>
    </location>
</feature>
<feature type="strand" evidence="19">
    <location>
        <begin position="328"/>
        <end position="332"/>
    </location>
</feature>
<feature type="helix" evidence="19">
    <location>
        <begin position="336"/>
        <end position="345"/>
    </location>
</feature>
<feature type="strand" evidence="20">
    <location>
        <begin position="349"/>
        <end position="351"/>
    </location>
</feature>
<feature type="helix" evidence="19">
    <location>
        <begin position="356"/>
        <end position="376"/>
    </location>
</feature>
<feature type="strand" evidence="19">
    <location>
        <begin position="378"/>
        <end position="383"/>
    </location>
</feature>
<feature type="helix" evidence="19">
    <location>
        <begin position="388"/>
        <end position="400"/>
    </location>
</feature>
<feature type="helix" evidence="19">
    <location>
        <begin position="404"/>
        <end position="406"/>
    </location>
</feature>
<comment type="function">
    <text evidence="1 5 6 7 13 14">Catalyzes the reaction that attaches fucose through an O-glycosidic linkage to a conserved serine or threonine residue in the consensus sequence C1-X-X-S/T-C2 of thrombospondin type I repeats (TSRs) where C1 and C2 are the first and second cysteines of the repeat, respectively (PubMed:22588082). O-fucosylates members of several protein families including the ADAMTS, the thrombospondin (TSP) and spondin families (Probable) (PubMed:17395588). Required for the proper secretion of ADAMTS family members such as ADAMTSL1 and ADAMTS13 (PubMed:17395588, PubMed:17395589). The O-fucosylation of TSRs is also required for restricting epithelial to mesenchymal transition (EMT), maintaining the correct patterning of mesoderm and localization of the definite endoderm (By similarity).</text>
</comment>
<comment type="catalytic activity">
    <reaction evidence="4 7">
        <text>L-seryl-[protein] + GDP-beta-L-fucose = 3-O-(alpha-L-fucosyl)-L-seryl-[protein] + GDP + H(+)</text>
        <dbReference type="Rhea" id="RHEA:63644"/>
        <dbReference type="Rhea" id="RHEA-COMP:9863"/>
        <dbReference type="Rhea" id="RHEA-COMP:17914"/>
        <dbReference type="ChEBI" id="CHEBI:15378"/>
        <dbReference type="ChEBI" id="CHEBI:29999"/>
        <dbReference type="ChEBI" id="CHEBI:57273"/>
        <dbReference type="ChEBI" id="CHEBI:58189"/>
        <dbReference type="ChEBI" id="CHEBI:189632"/>
        <dbReference type="EC" id="2.4.1.221"/>
    </reaction>
    <physiologicalReaction direction="left-to-right" evidence="4 7">
        <dbReference type="Rhea" id="RHEA:63645"/>
    </physiologicalReaction>
</comment>
<comment type="catalytic activity">
    <reaction evidence="4 7">
        <text>L-threonyl-[protein] + GDP-beta-L-fucose = 3-O-(alpha-L-fucosyl)-L-threonyl-[protein] + GDP + H(+)</text>
        <dbReference type="Rhea" id="RHEA:70491"/>
        <dbReference type="Rhea" id="RHEA-COMP:11060"/>
        <dbReference type="Rhea" id="RHEA-COMP:17915"/>
        <dbReference type="ChEBI" id="CHEBI:15378"/>
        <dbReference type="ChEBI" id="CHEBI:30013"/>
        <dbReference type="ChEBI" id="CHEBI:57273"/>
        <dbReference type="ChEBI" id="CHEBI:58189"/>
        <dbReference type="ChEBI" id="CHEBI:189631"/>
        <dbReference type="EC" id="2.4.1.221"/>
    </reaction>
    <physiologicalReaction direction="left-to-right" evidence="4 7">
        <dbReference type="Rhea" id="RHEA:70492"/>
    </physiologicalReaction>
</comment>
<comment type="activity regulation">
    <text evidence="7">Inhibited by EDTA and by Zn(2+).</text>
</comment>
<comment type="biophysicochemical properties">
    <kinetics>
        <KM evidence="7">9.8 uM for GDP-fucose</KM>
    </kinetics>
</comment>
<comment type="pathway">
    <text evidence="4 7">Protein modification; protein glycosylation.</text>
</comment>
<comment type="subcellular location">
    <subcellularLocation>
        <location evidence="3">Endoplasmic reticulum</location>
    </subcellularLocation>
    <subcellularLocation>
        <location evidence="3">Golgi apparatus</location>
    </subcellularLocation>
    <text evidence="3">Mainly located in the endoplasmic reticulum.</text>
</comment>
<comment type="alternative products">
    <event type="alternative splicing"/>
    <isoform>
        <id>Q9Y2G5-3</id>
        <name>C</name>
        <sequence type="displayed"/>
    </isoform>
    <isoform>
        <id>Q9Y2G5-1</id>
        <name>A</name>
        <sequence type="described" ref="VSP_003832"/>
    </isoform>
    <isoform>
        <id>Q9Y2G5-2</id>
        <name>B</name>
        <sequence type="described" ref="VSP_003833 VSP_003834"/>
    </isoform>
</comment>
<comment type="tissue specificity">
    <text evidence="3">Isoform A is expressed in fetal liver and peripheral blood lymphocytes. Isoform B is expressed in spleen, lung, testis, bone marrow, thymus, pancreas, prostate, fetal brain, fetal liver and fetal kidney. Isoform C is expressed in brain, heart, spleen, liver, lung, stomach, testis, placenta, skin, thymus, pancreas, mammary gland, prostate, fetal brain, fetal liver and fetal heart.</text>
</comment>
<comment type="similarity">
    <text evidence="12">Belongs to the glycosyltransferase 68 family.</text>
</comment>
<comment type="sequence caution" evidence="12">
    <conflict type="erroneous initiation">
        <sequence resource="EMBL-CDS" id="BAA76802"/>
    </conflict>
    <text>Extended N-terminus.</text>
</comment>
<comment type="sequence caution" evidence="12">
    <conflict type="erroneous initiation">
        <sequence resource="EMBL-CDS" id="CAB90496"/>
    </conflict>
    <text>Extended N-terminus.</text>
</comment>
<comment type="online information" name="Functional Glycomics Gateway - GTase">
    <link uri="http://www.functionalglycomics.org/glycomics/molecule/jsp/glycoEnzyme/viewGlycoEnzyme.jsp?gbpId=gt_hum_610"/>
    <text>Peptide-O-fucosyltransferase 2</text>
</comment>
<evidence type="ECO:0000250" key="1">
    <source>
        <dbReference type="UniProtKB" id="Q8VHI3"/>
    </source>
</evidence>
<evidence type="ECO:0000255" key="2"/>
<evidence type="ECO:0000269" key="3">
    <source>
    </source>
</evidence>
<evidence type="ECO:0000269" key="4">
    <source>
    </source>
</evidence>
<evidence type="ECO:0000269" key="5">
    <source>
    </source>
</evidence>
<evidence type="ECO:0000269" key="6">
    <source>
    </source>
</evidence>
<evidence type="ECO:0000269" key="7">
    <source>
    </source>
</evidence>
<evidence type="ECO:0000303" key="8">
    <source>
    </source>
</evidence>
<evidence type="ECO:0000303" key="9">
    <source>
    </source>
</evidence>
<evidence type="ECO:0000303" key="10">
    <source>
    </source>
</evidence>
<evidence type="ECO:0000303" key="11">
    <source>
    </source>
</evidence>
<evidence type="ECO:0000305" key="12"/>
<evidence type="ECO:0000305" key="13">
    <source>
    </source>
</evidence>
<evidence type="ECO:0000305" key="14">
    <source>
    </source>
</evidence>
<evidence type="ECO:0000305" key="15">
    <source>
    </source>
</evidence>
<evidence type="ECO:0007744" key="16">
    <source>
        <dbReference type="PDB" id="4AP5"/>
    </source>
</evidence>
<evidence type="ECO:0007744" key="17">
    <source>
        <dbReference type="PDB" id="4AP6"/>
    </source>
</evidence>
<evidence type="ECO:0007744" key="18">
    <source>
    </source>
</evidence>
<evidence type="ECO:0007829" key="19">
    <source>
        <dbReference type="PDB" id="4AP5"/>
    </source>
</evidence>
<evidence type="ECO:0007829" key="20">
    <source>
        <dbReference type="PDB" id="4AP6"/>
    </source>
</evidence>
<organism>
    <name type="scientific">Homo sapiens</name>
    <name type="common">Human</name>
    <dbReference type="NCBI Taxonomy" id="9606"/>
    <lineage>
        <taxon>Eukaryota</taxon>
        <taxon>Metazoa</taxon>
        <taxon>Chordata</taxon>
        <taxon>Craniata</taxon>
        <taxon>Vertebrata</taxon>
        <taxon>Euteleostomi</taxon>
        <taxon>Mammalia</taxon>
        <taxon>Eutheria</taxon>
        <taxon>Euarchontoglires</taxon>
        <taxon>Primates</taxon>
        <taxon>Haplorrhini</taxon>
        <taxon>Catarrhini</taxon>
        <taxon>Hominidae</taxon>
        <taxon>Homo</taxon>
    </lineage>
</organism>
<proteinExistence type="evidence at protein level"/>
<accession>Q9Y2G5</accession>
<accession>Q6PJV1</accession>
<accession>Q7Z4N0</accession>
<accession>Q8WWU6</accession>
<accession>Q9BQS4</accession>
<accession>Q9BQS5</accession>
<accession>Q9UFY3</accession>
<gene>
    <name type="primary">POFUT2</name>
    <name type="synonym">C21orf80</name>
    <name type="synonym">FUT13</name>
    <name type="synonym">KIAA0958</name>
</gene>
<reference key="1">
    <citation type="journal article" date="2004" name="Genomics">
        <title>The Caenorhabditis elegans ortholog of C21orf80, a potential new protein O-fucosyltransferase, is required for normal development.</title>
        <authorList>
            <person name="Menzel O."/>
            <person name="Vellai T."/>
            <person name="Takacs-Vellai K."/>
            <person name="Reymond A."/>
            <person name="Mueller F."/>
            <person name="Antonarakis S.E."/>
            <person name="Guipponi M."/>
        </authorList>
    </citation>
    <scope>NUCLEOTIDE SEQUENCE [MRNA] (ISOFORMS A; B AND C)</scope>
    <scope>SUBCELLULAR LOCATION</scope>
    <scope>TISSUE SPECIFICITY</scope>
</reference>
<reference key="2">
    <citation type="journal article" date="2003" name="Glycobiology">
        <title>A new superfamily of protein-O-fucosyltransferases, alpha2-fucosyltransferases, and alpha6-fucosyltransferases: phylogeny and identification of conserved peptide motifs.</title>
        <authorList>
            <person name="Martinez-Duncker I."/>
            <person name="Mollicone R."/>
            <person name="Candelier J.-J."/>
            <person name="Breton C."/>
            <person name="Oriol R."/>
        </authorList>
    </citation>
    <scope>NUCLEOTIDE SEQUENCE [MRNA] (ISOFORM C)</scope>
</reference>
<reference key="3">
    <citation type="journal article" date="1999" name="DNA Res.">
        <title>Prediction of the coding sequences of unidentified human genes. XIII. The complete sequences of 100 new cDNA clones from brain which code for large proteins in vitro.</title>
        <authorList>
            <person name="Nagase T."/>
            <person name="Ishikawa K."/>
            <person name="Suyama M."/>
            <person name="Kikuno R."/>
            <person name="Hirosawa M."/>
            <person name="Miyajima N."/>
            <person name="Tanaka A."/>
            <person name="Kotani H."/>
            <person name="Nomura N."/>
            <person name="Ohara O."/>
        </authorList>
    </citation>
    <scope>NUCLEOTIDE SEQUENCE [LARGE SCALE MRNA] (ISOFORM A)</scope>
    <source>
        <tissue>Brain</tissue>
    </source>
</reference>
<reference key="4">
    <citation type="journal article" date="2007" name="BMC Genomics">
        <title>The full-ORF clone resource of the German cDNA consortium.</title>
        <authorList>
            <person name="Bechtel S."/>
            <person name="Rosenfelder H."/>
            <person name="Duda A."/>
            <person name="Schmidt C.P."/>
            <person name="Ernst U."/>
            <person name="Wellenreuther R."/>
            <person name="Mehrle A."/>
            <person name="Schuster C."/>
            <person name="Bahr A."/>
            <person name="Bloecker H."/>
            <person name="Heubner D."/>
            <person name="Hoerlein A."/>
            <person name="Michel G."/>
            <person name="Wedler H."/>
            <person name="Koehrer K."/>
            <person name="Ottenwaelder B."/>
            <person name="Poustka A."/>
            <person name="Wiemann S."/>
            <person name="Schupp I."/>
        </authorList>
    </citation>
    <scope>NUCLEOTIDE SEQUENCE [LARGE SCALE MRNA] (ISOFORM B)</scope>
    <source>
        <tissue>Testis</tissue>
    </source>
</reference>
<reference key="5">
    <citation type="journal article" date="2000" name="Nature">
        <title>The DNA sequence of human chromosome 21.</title>
        <authorList>
            <person name="Hattori M."/>
            <person name="Fujiyama A."/>
            <person name="Taylor T.D."/>
            <person name="Watanabe H."/>
            <person name="Yada T."/>
            <person name="Park H.-S."/>
            <person name="Toyoda A."/>
            <person name="Ishii K."/>
            <person name="Totoki Y."/>
            <person name="Choi D.-K."/>
            <person name="Groner Y."/>
            <person name="Soeda E."/>
            <person name="Ohki M."/>
            <person name="Takagi T."/>
            <person name="Sakaki Y."/>
            <person name="Taudien S."/>
            <person name="Blechschmidt K."/>
            <person name="Polley A."/>
            <person name="Menzel U."/>
            <person name="Delabar J."/>
            <person name="Kumpf K."/>
            <person name="Lehmann R."/>
            <person name="Patterson D."/>
            <person name="Reichwald K."/>
            <person name="Rump A."/>
            <person name="Schillhabel M."/>
            <person name="Schudy A."/>
            <person name="Zimmermann W."/>
            <person name="Rosenthal A."/>
            <person name="Kudoh J."/>
            <person name="Shibuya K."/>
            <person name="Kawasaki K."/>
            <person name="Asakawa S."/>
            <person name="Shintani A."/>
            <person name="Sasaki T."/>
            <person name="Nagamine K."/>
            <person name="Mitsuyama S."/>
            <person name="Antonarakis S.E."/>
            <person name="Minoshima S."/>
            <person name="Shimizu N."/>
            <person name="Nordsiek G."/>
            <person name="Hornischer K."/>
            <person name="Brandt P."/>
            <person name="Scharfe M."/>
            <person name="Schoen O."/>
            <person name="Desario A."/>
            <person name="Reichelt J."/>
            <person name="Kauer G."/>
            <person name="Bloecker H."/>
            <person name="Ramser J."/>
            <person name="Beck A."/>
            <person name="Klages S."/>
            <person name="Hennig S."/>
            <person name="Riesselmann L."/>
            <person name="Dagand E."/>
            <person name="Wehrmeyer S."/>
            <person name="Borzym K."/>
            <person name="Gardiner K."/>
            <person name="Nizetic D."/>
            <person name="Francis F."/>
            <person name="Lehrach H."/>
            <person name="Reinhardt R."/>
            <person name="Yaspo M.-L."/>
        </authorList>
    </citation>
    <scope>NUCLEOTIDE SEQUENCE [LARGE SCALE GENOMIC DNA]</scope>
</reference>
<reference key="6">
    <citation type="journal article" date="2004" name="Genome Res.">
        <title>The status, quality, and expansion of the NIH full-length cDNA project: the Mammalian Gene Collection (MGC).</title>
        <authorList>
            <consortium name="The MGC Project Team"/>
        </authorList>
    </citation>
    <scope>NUCLEOTIDE SEQUENCE [LARGE SCALE MRNA] (ISOFORMS B AND C)</scope>
    <source>
        <tissue>Brain</tissue>
    </source>
</reference>
<reference key="7">
    <citation type="journal article" date="2001" name="J. Biol. Chem.">
        <title>C-mannosylation and O-fucosylation of the thrombospondin type 1 module.</title>
        <authorList>
            <person name="Hofsteenge J."/>
            <person name="Huwiler K.G."/>
            <person name="Macek B."/>
            <person name="Hess D."/>
            <person name="Lawler J."/>
            <person name="Mosher D.F."/>
            <person name="Peter-Katalinic J."/>
        </authorList>
    </citation>
    <scope>FUNCTION</scope>
</reference>
<reference key="8">
    <citation type="journal article" date="2006" name="J. Biol. Chem.">
        <title>Two distinct pathways for O-fucosylation of epidermal growth factor-like or thrombospondin type 1 repeats.</title>
        <authorList>
            <person name="Luo Y."/>
            <person name="Nita-Lazar A."/>
            <person name="Haltiwanger R.S."/>
        </authorList>
    </citation>
    <scope>FUNCTION</scope>
    <scope>CATALYTIC ACTIVITY</scope>
    <scope>PATHWAY</scope>
</reference>
<reference key="9">
    <citation type="journal article" date="2007" name="J. Biol. Chem.">
        <title>O-fucosylation is required for ADAMTS13 secretion.</title>
        <authorList>
            <person name="Ricketts L.M."/>
            <person name="Dlugosz M."/>
            <person name="Luther K.B."/>
            <person name="Haltiwanger R.S."/>
            <person name="Majerus E.M."/>
        </authorList>
    </citation>
    <scope>FUNCTION</scope>
    <scope>MUTAGENESIS OF GLU-395 AND GLU-396</scope>
</reference>
<reference key="10">
    <citation type="journal article" date="2007" name="J. Biol. Chem.">
        <title>O-fucosylation of thrombospondin type 1 repeats in ADAMTS-like-1/punctin-1 regulates secretion: implications for the ADAMTS superfamily.</title>
        <authorList>
            <person name="Wang L.W."/>
            <person name="Dlugosz M."/>
            <person name="Somerville R.P."/>
            <person name="Raed M."/>
            <person name="Haltiwanger R.S."/>
            <person name="Apte S.S."/>
        </authorList>
    </citation>
    <scope>FUNCTION</scope>
</reference>
<reference key="11">
    <citation type="journal article" date="2015" name="Proteomics">
        <title>N-terminome analysis of the human mitochondrial proteome.</title>
        <authorList>
            <person name="Vaca Jacome A.S."/>
            <person name="Rabilloud T."/>
            <person name="Schaeffer-Reiss C."/>
            <person name="Rompais M."/>
            <person name="Ayoub D."/>
            <person name="Lane L."/>
            <person name="Bairoch A."/>
            <person name="Van Dorsselaer A."/>
            <person name="Carapito C."/>
        </authorList>
    </citation>
    <scope>CLEAVAGE OF SIGNAL PEPTIDE [LARGE SCALE ANALYSIS] AFTER ALA-21</scope>
    <scope>IDENTIFICATION BY MASS SPECTROMETRY [LARGE SCALE ANALYSIS]</scope>
</reference>
<reference key="12">
    <citation type="journal article" date="2012" name="EMBO J.">
        <title>Structure of human POFUT2: insights into thrombospondin type 1 repeat fold and O-fucosylation.</title>
        <authorList>
            <person name="Chen C.I."/>
            <person name="Keusch J.J."/>
            <person name="Klein D."/>
            <person name="Hess D."/>
            <person name="Hofsteenge J."/>
            <person name="Gut H."/>
        </authorList>
    </citation>
    <scope>X-RAY CRYSTALLOGRAPHY (3.0 ANGSTROMS) OF 22-429 IN COMPLEX WITH GDP-FUCOSE</scope>
    <scope>FUNCTION</scope>
    <scope>CATALYTIC ACTIVITY</scope>
    <scope>ACTIVITY REGULATION</scope>
    <scope>BIOPHYSICOCHEMICAL PROPERTIES</scope>
    <scope>PATHWAY</scope>
    <scope>MUTAGENESIS OF GLU-54; TRP-92; TRP-152; TRP-273; ARG-294; ASP-297 AND GLU-396</scope>
    <scope>GLYCOSYLATION AT ASN-189 AND ASN-259</scope>
    <scope>DISULFIDE BONDS</scope>
</reference>